<feature type="chain" id="PRO_0000174612" description="S-adenosylmethionine synthase">
    <location>
        <begin position="1"/>
        <end position="426"/>
    </location>
</feature>
<feature type="region of interest" description="Flexible loop" evidence="1">
    <location>
        <begin position="106"/>
        <end position="116"/>
    </location>
</feature>
<feature type="binding site" description="in other chain" evidence="1">
    <location>
        <position position="22"/>
    </location>
    <ligand>
        <name>ATP</name>
        <dbReference type="ChEBI" id="CHEBI:30616"/>
        <note>ligand shared between two neighboring subunits</note>
    </ligand>
</feature>
<feature type="binding site" evidence="1">
    <location>
        <position position="24"/>
    </location>
    <ligand>
        <name>Mg(2+)</name>
        <dbReference type="ChEBI" id="CHEBI:18420"/>
    </ligand>
</feature>
<feature type="binding site" evidence="1">
    <location>
        <position position="50"/>
    </location>
    <ligand>
        <name>K(+)</name>
        <dbReference type="ChEBI" id="CHEBI:29103"/>
    </ligand>
</feature>
<feature type="binding site" description="in other chain" evidence="1">
    <location>
        <position position="63"/>
    </location>
    <ligand>
        <name>L-methionine</name>
        <dbReference type="ChEBI" id="CHEBI:57844"/>
        <note>ligand shared between two neighboring subunits</note>
    </ligand>
</feature>
<feature type="binding site" description="in other chain" evidence="1">
    <location>
        <position position="106"/>
    </location>
    <ligand>
        <name>L-methionine</name>
        <dbReference type="ChEBI" id="CHEBI:57844"/>
        <note>ligand shared between two neighboring subunits</note>
    </ligand>
</feature>
<feature type="binding site" description="in other chain" evidence="1">
    <location>
        <begin position="181"/>
        <end position="183"/>
    </location>
    <ligand>
        <name>ATP</name>
        <dbReference type="ChEBI" id="CHEBI:30616"/>
        <note>ligand shared between two neighboring subunits</note>
    </ligand>
</feature>
<feature type="binding site" description="in other chain" evidence="1">
    <location>
        <begin position="257"/>
        <end position="258"/>
    </location>
    <ligand>
        <name>ATP</name>
        <dbReference type="ChEBI" id="CHEBI:30616"/>
        <note>ligand shared between two neighboring subunits</note>
    </ligand>
</feature>
<feature type="binding site" evidence="1">
    <location>
        <position position="266"/>
    </location>
    <ligand>
        <name>ATP</name>
        <dbReference type="ChEBI" id="CHEBI:30616"/>
        <note>ligand shared between two neighboring subunits</note>
    </ligand>
</feature>
<feature type="binding site" evidence="1">
    <location>
        <position position="266"/>
    </location>
    <ligand>
        <name>L-methionine</name>
        <dbReference type="ChEBI" id="CHEBI:57844"/>
        <note>ligand shared between two neighboring subunits</note>
    </ligand>
</feature>
<feature type="binding site" description="in other chain" evidence="1">
    <location>
        <begin position="272"/>
        <end position="273"/>
    </location>
    <ligand>
        <name>ATP</name>
        <dbReference type="ChEBI" id="CHEBI:30616"/>
        <note>ligand shared between two neighboring subunits</note>
    </ligand>
</feature>
<feature type="binding site" evidence="1">
    <location>
        <position position="289"/>
    </location>
    <ligand>
        <name>ATP</name>
        <dbReference type="ChEBI" id="CHEBI:30616"/>
        <note>ligand shared between two neighboring subunits</note>
    </ligand>
</feature>
<feature type="binding site" evidence="1">
    <location>
        <position position="293"/>
    </location>
    <ligand>
        <name>ATP</name>
        <dbReference type="ChEBI" id="CHEBI:30616"/>
        <note>ligand shared between two neighboring subunits</note>
    </ligand>
</feature>
<feature type="binding site" description="in other chain" evidence="1">
    <location>
        <position position="297"/>
    </location>
    <ligand>
        <name>L-methionine</name>
        <dbReference type="ChEBI" id="CHEBI:57844"/>
        <note>ligand shared between two neighboring subunits</note>
    </ligand>
</feature>
<protein>
    <recommendedName>
        <fullName evidence="1">S-adenosylmethionine synthase</fullName>
        <shortName evidence="1">AdoMet synthase</shortName>
        <ecNumber evidence="1">2.5.1.6</ecNumber>
    </recommendedName>
    <alternativeName>
        <fullName evidence="1">MAT</fullName>
    </alternativeName>
    <alternativeName>
        <fullName evidence="1">Methionine adenosyltransferase</fullName>
    </alternativeName>
</protein>
<reference key="1">
    <citation type="journal article" date="1996" name="DNA Res.">
        <title>Sequence analysis of the genome of the unicellular cyanobacterium Synechocystis sp. strain PCC6803. II. Sequence determination of the entire genome and assignment of potential protein-coding regions.</title>
        <authorList>
            <person name="Kaneko T."/>
            <person name="Sato S."/>
            <person name="Kotani H."/>
            <person name="Tanaka A."/>
            <person name="Asamizu E."/>
            <person name="Nakamura Y."/>
            <person name="Miyajima N."/>
            <person name="Hirosawa M."/>
            <person name="Sugiura M."/>
            <person name="Sasamoto S."/>
            <person name="Kimura T."/>
            <person name="Hosouchi T."/>
            <person name="Matsuno A."/>
            <person name="Muraki A."/>
            <person name="Nakazaki N."/>
            <person name="Naruo K."/>
            <person name="Okumura S."/>
            <person name="Shimpo S."/>
            <person name="Takeuchi C."/>
            <person name="Wada T."/>
            <person name="Watanabe A."/>
            <person name="Yamada M."/>
            <person name="Yasuda M."/>
            <person name="Tabata S."/>
        </authorList>
    </citation>
    <scope>NUCLEOTIDE SEQUENCE [LARGE SCALE GENOMIC DNA]</scope>
    <source>
        <strain>ATCC 27184 / PCC 6803 / Kazusa</strain>
    </source>
</reference>
<organism>
    <name type="scientific">Synechocystis sp. (strain ATCC 27184 / PCC 6803 / Kazusa)</name>
    <dbReference type="NCBI Taxonomy" id="1111708"/>
    <lineage>
        <taxon>Bacteria</taxon>
        <taxon>Bacillati</taxon>
        <taxon>Cyanobacteriota</taxon>
        <taxon>Cyanophyceae</taxon>
        <taxon>Synechococcales</taxon>
        <taxon>Merismopediaceae</taxon>
        <taxon>Synechocystis</taxon>
    </lineage>
</organism>
<name>METK_SYNY3</name>
<gene>
    <name evidence="1" type="primary">metK</name>
    <name type="ordered locus">sll0927</name>
</gene>
<dbReference type="EC" id="2.5.1.6" evidence="1"/>
<dbReference type="EMBL" id="BA000022">
    <property type="protein sequence ID" value="BAA16887.1"/>
    <property type="status" value="ALT_INIT"/>
    <property type="molecule type" value="Genomic_DNA"/>
</dbReference>
<dbReference type="PIR" id="S74736">
    <property type="entry name" value="S74736"/>
</dbReference>
<dbReference type="SMR" id="P72871"/>
<dbReference type="FunCoup" id="P72871">
    <property type="interactions" value="476"/>
</dbReference>
<dbReference type="IntAct" id="P72871">
    <property type="interactions" value="1"/>
</dbReference>
<dbReference type="STRING" id="1148.gene:10497746"/>
<dbReference type="PaxDb" id="1148-1651961"/>
<dbReference type="EnsemblBacteria" id="BAA16887">
    <property type="protein sequence ID" value="BAA16887"/>
    <property type="gene ID" value="BAA16887"/>
</dbReference>
<dbReference type="KEGG" id="syn:sll0927"/>
<dbReference type="eggNOG" id="COG0192">
    <property type="taxonomic scope" value="Bacteria"/>
</dbReference>
<dbReference type="InParanoid" id="P72871"/>
<dbReference type="PhylomeDB" id="P72871"/>
<dbReference type="UniPathway" id="UPA00315">
    <property type="reaction ID" value="UER00080"/>
</dbReference>
<dbReference type="Proteomes" id="UP000001425">
    <property type="component" value="Chromosome"/>
</dbReference>
<dbReference type="GO" id="GO:0005829">
    <property type="term" value="C:cytosol"/>
    <property type="evidence" value="ECO:0000318"/>
    <property type="project" value="GO_Central"/>
</dbReference>
<dbReference type="GO" id="GO:0005524">
    <property type="term" value="F:ATP binding"/>
    <property type="evidence" value="ECO:0007669"/>
    <property type="project" value="UniProtKB-UniRule"/>
</dbReference>
<dbReference type="GO" id="GO:0000287">
    <property type="term" value="F:magnesium ion binding"/>
    <property type="evidence" value="ECO:0007669"/>
    <property type="project" value="UniProtKB-UniRule"/>
</dbReference>
<dbReference type="GO" id="GO:0004478">
    <property type="term" value="F:methionine adenosyltransferase activity"/>
    <property type="evidence" value="ECO:0000318"/>
    <property type="project" value="GO_Central"/>
</dbReference>
<dbReference type="GO" id="GO:0006730">
    <property type="term" value="P:one-carbon metabolic process"/>
    <property type="evidence" value="ECO:0007669"/>
    <property type="project" value="UniProtKB-KW"/>
</dbReference>
<dbReference type="GO" id="GO:0006556">
    <property type="term" value="P:S-adenosylmethionine biosynthetic process"/>
    <property type="evidence" value="ECO:0000318"/>
    <property type="project" value="GO_Central"/>
</dbReference>
<dbReference type="CDD" id="cd18079">
    <property type="entry name" value="S-AdoMet_synt"/>
    <property type="match status" value="1"/>
</dbReference>
<dbReference type="FunFam" id="3.30.300.10:FF:000003">
    <property type="entry name" value="S-adenosylmethionine synthase"/>
    <property type="match status" value="1"/>
</dbReference>
<dbReference type="Gene3D" id="3.30.300.10">
    <property type="match status" value="3"/>
</dbReference>
<dbReference type="HAMAP" id="MF_00086">
    <property type="entry name" value="S_AdoMet_synth1"/>
    <property type="match status" value="1"/>
</dbReference>
<dbReference type="InterPro" id="IPR022631">
    <property type="entry name" value="ADOMET_SYNTHASE_CS"/>
</dbReference>
<dbReference type="InterPro" id="IPR022630">
    <property type="entry name" value="S-AdoMet_synt_C"/>
</dbReference>
<dbReference type="InterPro" id="IPR022629">
    <property type="entry name" value="S-AdoMet_synt_central"/>
</dbReference>
<dbReference type="InterPro" id="IPR022628">
    <property type="entry name" value="S-AdoMet_synt_N"/>
</dbReference>
<dbReference type="InterPro" id="IPR002133">
    <property type="entry name" value="S-AdoMet_synthetase"/>
</dbReference>
<dbReference type="InterPro" id="IPR022636">
    <property type="entry name" value="S-AdoMet_synthetase_sfam"/>
</dbReference>
<dbReference type="NCBIfam" id="TIGR01034">
    <property type="entry name" value="metK"/>
    <property type="match status" value="1"/>
</dbReference>
<dbReference type="PANTHER" id="PTHR11964">
    <property type="entry name" value="S-ADENOSYLMETHIONINE SYNTHETASE"/>
    <property type="match status" value="1"/>
</dbReference>
<dbReference type="Pfam" id="PF02773">
    <property type="entry name" value="S-AdoMet_synt_C"/>
    <property type="match status" value="1"/>
</dbReference>
<dbReference type="Pfam" id="PF02772">
    <property type="entry name" value="S-AdoMet_synt_M"/>
    <property type="match status" value="1"/>
</dbReference>
<dbReference type="Pfam" id="PF00438">
    <property type="entry name" value="S-AdoMet_synt_N"/>
    <property type="match status" value="1"/>
</dbReference>
<dbReference type="PIRSF" id="PIRSF000497">
    <property type="entry name" value="MAT"/>
    <property type="match status" value="1"/>
</dbReference>
<dbReference type="SUPFAM" id="SSF55973">
    <property type="entry name" value="S-adenosylmethionine synthetase"/>
    <property type="match status" value="3"/>
</dbReference>
<dbReference type="PROSITE" id="PS00376">
    <property type="entry name" value="ADOMET_SYNTHASE_1"/>
    <property type="match status" value="1"/>
</dbReference>
<dbReference type="PROSITE" id="PS00377">
    <property type="entry name" value="ADOMET_SYNTHASE_2"/>
    <property type="match status" value="1"/>
</dbReference>
<proteinExistence type="inferred from homology"/>
<sequence length="426" mass="45866">MRGLKTLSKRYLFTSESVTEGHPDKVCDQISDTILDALLTLDPNSRVAAETVVNTGLTLVTGEITSQAHINFVELIRQKIAEIGYTNADNGYSANSCAVMLAIDEQSPDISQGVTAAQEQRHALSDDELDKIGAGDQGLMFGYACNETPELMPLPISLAHRIALRLSEVRKSGQLAYLRPDGKTQVSILYEDGSPVAIDTILISTQHDEHIGDITDNDAVQAKIKADLWDVVVGHCFSDIALKPTDKTRFIVNPTGKFVVGGPQGDAGLTGRKIIVDTYGGYSRHGGGAFSGKDPTKVDRSAAYAARYVAKNIVAAGLADKCEVQVSYAIGVARPVSVLIDTFGTGKVDEEKLLEVVLANFELRPAGIIQSLNLRNLPAERGGRFYQDVAAYGHFGRNDLDLPWEYTDKVDVLKAAFASSPQAVAV</sequence>
<evidence type="ECO:0000255" key="1">
    <source>
        <dbReference type="HAMAP-Rule" id="MF_00086"/>
    </source>
</evidence>
<evidence type="ECO:0000305" key="2"/>
<comment type="function">
    <text evidence="1">Catalyzes the formation of S-adenosylmethionine (AdoMet) from methionine and ATP. The overall synthetic reaction is composed of two sequential steps, AdoMet formation and the subsequent tripolyphosphate hydrolysis which occurs prior to release of AdoMet from the enzyme.</text>
</comment>
<comment type="catalytic activity">
    <reaction evidence="1">
        <text>L-methionine + ATP + H2O = S-adenosyl-L-methionine + phosphate + diphosphate</text>
        <dbReference type="Rhea" id="RHEA:21080"/>
        <dbReference type="ChEBI" id="CHEBI:15377"/>
        <dbReference type="ChEBI" id="CHEBI:30616"/>
        <dbReference type="ChEBI" id="CHEBI:33019"/>
        <dbReference type="ChEBI" id="CHEBI:43474"/>
        <dbReference type="ChEBI" id="CHEBI:57844"/>
        <dbReference type="ChEBI" id="CHEBI:59789"/>
        <dbReference type="EC" id="2.5.1.6"/>
    </reaction>
</comment>
<comment type="cofactor">
    <cofactor evidence="1">
        <name>Mg(2+)</name>
        <dbReference type="ChEBI" id="CHEBI:18420"/>
    </cofactor>
    <text evidence="1">Binds 2 divalent ions per subunit.</text>
</comment>
<comment type="cofactor">
    <cofactor evidence="1">
        <name>K(+)</name>
        <dbReference type="ChEBI" id="CHEBI:29103"/>
    </cofactor>
    <text evidence="1">Binds 1 potassium ion per subunit.</text>
</comment>
<comment type="pathway">
    <text evidence="1">Amino-acid biosynthesis; S-adenosyl-L-methionine biosynthesis; S-adenosyl-L-methionine from L-methionine: step 1/1.</text>
</comment>
<comment type="subunit">
    <text evidence="1">Homotetramer; dimer of dimers.</text>
</comment>
<comment type="subcellular location">
    <subcellularLocation>
        <location evidence="1">Cytoplasm</location>
    </subcellularLocation>
</comment>
<comment type="similarity">
    <text evidence="1">Belongs to the AdoMet synthase family.</text>
</comment>
<comment type="sequence caution" evidence="2">
    <conflict type="erroneous initiation">
        <sequence resource="EMBL-CDS" id="BAA16887"/>
    </conflict>
</comment>
<accession>P72871</accession>
<keyword id="KW-0067">ATP-binding</keyword>
<keyword id="KW-0963">Cytoplasm</keyword>
<keyword id="KW-0460">Magnesium</keyword>
<keyword id="KW-0479">Metal-binding</keyword>
<keyword id="KW-0547">Nucleotide-binding</keyword>
<keyword id="KW-0554">One-carbon metabolism</keyword>
<keyword id="KW-0630">Potassium</keyword>
<keyword id="KW-1185">Reference proteome</keyword>
<keyword id="KW-0808">Transferase</keyword>